<feature type="chain" id="PRO_1000048963" description="Large ribosomal subunit protein bL20">
    <location>
        <begin position="1"/>
        <end position="119"/>
    </location>
</feature>
<comment type="function">
    <text evidence="1">Binds directly to 23S ribosomal RNA and is necessary for the in vitro assembly process of the 50S ribosomal subunit. It is not involved in the protein synthesizing functions of that subunit.</text>
</comment>
<comment type="similarity">
    <text evidence="1">Belongs to the bacterial ribosomal protein bL20 family.</text>
</comment>
<organism>
    <name type="scientific">Clostridium perfringens (strain SM101 / Type A)</name>
    <dbReference type="NCBI Taxonomy" id="289380"/>
    <lineage>
        <taxon>Bacteria</taxon>
        <taxon>Bacillati</taxon>
        <taxon>Bacillota</taxon>
        <taxon>Clostridia</taxon>
        <taxon>Eubacteriales</taxon>
        <taxon>Clostridiaceae</taxon>
        <taxon>Clostridium</taxon>
    </lineage>
</organism>
<gene>
    <name evidence="1" type="primary">rplT</name>
    <name type="ordered locus">CPR_1856</name>
</gene>
<name>RL20_CLOPS</name>
<dbReference type="EMBL" id="CP000312">
    <property type="protein sequence ID" value="ABG87857.1"/>
    <property type="molecule type" value="Genomic_DNA"/>
</dbReference>
<dbReference type="RefSeq" id="WP_003451332.1">
    <property type="nucleotide sequence ID" value="NZ_CAXVKH010000002.1"/>
</dbReference>
<dbReference type="SMR" id="Q0SRT7"/>
<dbReference type="GeneID" id="93001575"/>
<dbReference type="KEGG" id="cpr:CPR_1856"/>
<dbReference type="Proteomes" id="UP000001824">
    <property type="component" value="Chromosome"/>
</dbReference>
<dbReference type="GO" id="GO:1990904">
    <property type="term" value="C:ribonucleoprotein complex"/>
    <property type="evidence" value="ECO:0007669"/>
    <property type="project" value="UniProtKB-KW"/>
</dbReference>
<dbReference type="GO" id="GO:0005840">
    <property type="term" value="C:ribosome"/>
    <property type="evidence" value="ECO:0007669"/>
    <property type="project" value="UniProtKB-KW"/>
</dbReference>
<dbReference type="GO" id="GO:0019843">
    <property type="term" value="F:rRNA binding"/>
    <property type="evidence" value="ECO:0007669"/>
    <property type="project" value="UniProtKB-UniRule"/>
</dbReference>
<dbReference type="GO" id="GO:0003735">
    <property type="term" value="F:structural constituent of ribosome"/>
    <property type="evidence" value="ECO:0007669"/>
    <property type="project" value="InterPro"/>
</dbReference>
<dbReference type="GO" id="GO:0000027">
    <property type="term" value="P:ribosomal large subunit assembly"/>
    <property type="evidence" value="ECO:0007669"/>
    <property type="project" value="UniProtKB-UniRule"/>
</dbReference>
<dbReference type="GO" id="GO:0006412">
    <property type="term" value="P:translation"/>
    <property type="evidence" value="ECO:0007669"/>
    <property type="project" value="InterPro"/>
</dbReference>
<dbReference type="CDD" id="cd07026">
    <property type="entry name" value="Ribosomal_L20"/>
    <property type="match status" value="1"/>
</dbReference>
<dbReference type="FunFam" id="1.10.1900.20:FF:000001">
    <property type="entry name" value="50S ribosomal protein L20"/>
    <property type="match status" value="1"/>
</dbReference>
<dbReference type="Gene3D" id="6.10.160.10">
    <property type="match status" value="1"/>
</dbReference>
<dbReference type="Gene3D" id="1.10.1900.20">
    <property type="entry name" value="Ribosomal protein L20"/>
    <property type="match status" value="1"/>
</dbReference>
<dbReference type="HAMAP" id="MF_00382">
    <property type="entry name" value="Ribosomal_bL20"/>
    <property type="match status" value="1"/>
</dbReference>
<dbReference type="InterPro" id="IPR005813">
    <property type="entry name" value="Ribosomal_bL20"/>
</dbReference>
<dbReference type="InterPro" id="IPR049946">
    <property type="entry name" value="RIBOSOMAL_L20_CS"/>
</dbReference>
<dbReference type="InterPro" id="IPR035566">
    <property type="entry name" value="Ribosomal_protein_bL20_C"/>
</dbReference>
<dbReference type="NCBIfam" id="TIGR01032">
    <property type="entry name" value="rplT_bact"/>
    <property type="match status" value="1"/>
</dbReference>
<dbReference type="PANTHER" id="PTHR10986">
    <property type="entry name" value="39S RIBOSOMAL PROTEIN L20"/>
    <property type="match status" value="1"/>
</dbReference>
<dbReference type="Pfam" id="PF00453">
    <property type="entry name" value="Ribosomal_L20"/>
    <property type="match status" value="1"/>
</dbReference>
<dbReference type="PRINTS" id="PR00062">
    <property type="entry name" value="RIBOSOMALL20"/>
</dbReference>
<dbReference type="SUPFAM" id="SSF74731">
    <property type="entry name" value="Ribosomal protein L20"/>
    <property type="match status" value="1"/>
</dbReference>
<dbReference type="PROSITE" id="PS00937">
    <property type="entry name" value="RIBOSOMAL_L20"/>
    <property type="match status" value="1"/>
</dbReference>
<keyword id="KW-0687">Ribonucleoprotein</keyword>
<keyword id="KW-0689">Ribosomal protein</keyword>
<keyword id="KW-0694">RNA-binding</keyword>
<keyword id="KW-0699">rRNA-binding</keyword>
<proteinExistence type="inferred from homology"/>
<sequence>MARVKRAVNARKNHKKVLKLAKGYYGGKSKLFKTANESVIRALRNAYVGRRLKKRDYRRLWIARINAATRMNGLSYSRFMNGMKLAGVDINRKMLSEIAINDPKAFADLVELAKKHLNA</sequence>
<evidence type="ECO:0000255" key="1">
    <source>
        <dbReference type="HAMAP-Rule" id="MF_00382"/>
    </source>
</evidence>
<evidence type="ECO:0000305" key="2"/>
<reference key="1">
    <citation type="journal article" date="2006" name="Genome Res.">
        <title>Skewed genomic variability in strains of the toxigenic bacterial pathogen, Clostridium perfringens.</title>
        <authorList>
            <person name="Myers G.S.A."/>
            <person name="Rasko D.A."/>
            <person name="Cheung J.K."/>
            <person name="Ravel J."/>
            <person name="Seshadri R."/>
            <person name="DeBoy R.T."/>
            <person name="Ren Q."/>
            <person name="Varga J."/>
            <person name="Awad M.M."/>
            <person name="Brinkac L.M."/>
            <person name="Daugherty S.C."/>
            <person name="Haft D.H."/>
            <person name="Dodson R.J."/>
            <person name="Madupu R."/>
            <person name="Nelson W.C."/>
            <person name="Rosovitz M.J."/>
            <person name="Sullivan S.A."/>
            <person name="Khouri H."/>
            <person name="Dimitrov G.I."/>
            <person name="Watkins K.L."/>
            <person name="Mulligan S."/>
            <person name="Benton J."/>
            <person name="Radune D."/>
            <person name="Fisher D.J."/>
            <person name="Atkins H.S."/>
            <person name="Hiscox T."/>
            <person name="Jost B.H."/>
            <person name="Billington S.J."/>
            <person name="Songer J.G."/>
            <person name="McClane B.A."/>
            <person name="Titball R.W."/>
            <person name="Rood J.I."/>
            <person name="Melville S.B."/>
            <person name="Paulsen I.T."/>
        </authorList>
    </citation>
    <scope>NUCLEOTIDE SEQUENCE [LARGE SCALE GENOMIC DNA]</scope>
    <source>
        <strain>SM101 / Type A</strain>
    </source>
</reference>
<protein>
    <recommendedName>
        <fullName evidence="1">Large ribosomal subunit protein bL20</fullName>
    </recommendedName>
    <alternativeName>
        <fullName evidence="2">50S ribosomal protein L20</fullName>
    </alternativeName>
</protein>
<accession>Q0SRT7</accession>